<comment type="function">
    <text evidence="1">Bradykinin-potentiating peptides both inhibit the activity of the angiotensin-converting enzyme (ACE) and enhances the action of bradykinin by inhibiting the peptidases that inactivate it. They act as indirect hypotensive agent (By similarity).</text>
</comment>
<comment type="function">
    <molecule>Bradykinin-potentiating peptide 1</molecule>
    <text evidence="8">inhibits angiotensin-converting enzyme (ACE) activity (IC(50)=4.25 uM), preventing the release of angiotensin and thus indirectly contributing to hypotension. In vivo, induce hypotensive response in both normotensive and hypertensive rats.</text>
</comment>
<comment type="function">
    <molecule>Bradykinin inhibitory peptide</molecule>
    <text evidence="7">antagonizes the vasodilatory actions of bradykinin at the B2 bradykinin receptor (BDKRB2).</text>
</comment>
<comment type="function">
    <molecule>C-type natriuretic peptide</molecule>
    <text evidence="2">has a vasorelaxant activity in rat aortic strips and a diuretic potency in anesthetized rats (By similarity). May act by activating natriuretic receptors (NPR1 and/or NPR2).</text>
</comment>
<comment type="subcellular location">
    <subcellularLocation>
        <location evidence="6 7 8">Secreted</location>
    </subcellularLocation>
</comment>
<comment type="tissue specificity">
    <text evidence="14 15 16">Expressed by the venom gland.</text>
</comment>
<comment type="mass spectrometry">
    <molecule>Bradykinin-potentiating peptide 1</molecule>
    <text>Bradykinin-potentiating peptide 1.</text>
</comment>
<comment type="mass spectrometry">
    <molecule>Bradykinin-potentiating peptide 1</molecule>
</comment>
<comment type="mass spectrometry">
    <molecule>Bradykinin-potentiating peptide 2</molecule>
    <text>Bradykinin-potentiating peptide 2.</text>
</comment>
<comment type="mass spectrometry">
    <molecule>Bradykinin-potentiating peptide 3</molecule>
    <text>Bradykinin-potentiating peptide 3.</text>
</comment>
<comment type="mass spectrometry">
    <molecule>Bradykinin-potentiating peptide 4</molecule>
    <text>Bradykinin-potentiating peptide 4.</text>
</comment>
<comment type="mass spectrometry">
    <molecule>Bradykinin-potentiating peptide 5</molecule>
    <text>Bradykinin-potentiating peptide 5.</text>
</comment>
<comment type="mass spectrometry">
    <molecule>Bradykinin inhibitory peptide</molecule>
    <text>Bradykinin inhibitor peptide.</text>
</comment>
<comment type="miscellaneous">
    <molecule>Bradykinin inhibitory peptide</molecule>
    <text evidence="13">The primary structure of the mature peptide is identical to that of bradykinin inhibitor peptide from C.v.viridis (AC P85024) and A.bilineatus (AC P85025).</text>
</comment>
<comment type="similarity">
    <text evidence="13">In the N-terminal section; belongs to the bradykinin-potentiating peptide family.</text>
</comment>
<comment type="similarity">
    <text evidence="13">In the central section; belongs to the bradykinin inhibitor peptide family.</text>
</comment>
<comment type="similarity">
    <text evidence="4">In the C-terminal section; belongs to the natriuretic peptide family.</text>
</comment>
<dbReference type="EMBL" id="DQ396475">
    <property type="protein sequence ID" value="ABD52884.1"/>
    <property type="molecule type" value="mRNA"/>
</dbReference>
<dbReference type="GO" id="GO:0005576">
    <property type="term" value="C:extracellular region"/>
    <property type="evidence" value="ECO:0000314"/>
    <property type="project" value="UniProtKB"/>
</dbReference>
<dbReference type="GO" id="GO:0005179">
    <property type="term" value="F:hormone activity"/>
    <property type="evidence" value="ECO:0007669"/>
    <property type="project" value="InterPro"/>
</dbReference>
<dbReference type="GO" id="GO:0030414">
    <property type="term" value="F:peptidase inhibitor activity"/>
    <property type="evidence" value="ECO:0007669"/>
    <property type="project" value="UniProtKB-KW"/>
</dbReference>
<dbReference type="GO" id="GO:0090729">
    <property type="term" value="F:toxin activity"/>
    <property type="evidence" value="ECO:0007669"/>
    <property type="project" value="UniProtKB-KW"/>
</dbReference>
<dbReference type="GO" id="GO:0006182">
    <property type="term" value="P:cGMP biosynthetic process"/>
    <property type="evidence" value="ECO:0007669"/>
    <property type="project" value="TreeGrafter"/>
</dbReference>
<dbReference type="GO" id="GO:0007168">
    <property type="term" value="P:receptor guanylyl cyclase signaling pathway"/>
    <property type="evidence" value="ECO:0007669"/>
    <property type="project" value="TreeGrafter"/>
</dbReference>
<dbReference type="GO" id="GO:0008217">
    <property type="term" value="P:regulation of blood pressure"/>
    <property type="evidence" value="ECO:0007669"/>
    <property type="project" value="UniProtKB-KW"/>
</dbReference>
<dbReference type="GO" id="GO:0042311">
    <property type="term" value="P:vasodilation"/>
    <property type="evidence" value="ECO:0007669"/>
    <property type="project" value="UniProtKB-KW"/>
</dbReference>
<dbReference type="InterPro" id="IPR000663">
    <property type="entry name" value="Natr_peptide"/>
</dbReference>
<dbReference type="InterPro" id="IPR030480">
    <property type="entry name" value="Natr_peptide_CS"/>
</dbReference>
<dbReference type="PANTHER" id="PTHR12167">
    <property type="entry name" value="C-TYPE NATRIURETIC PEPTIDE"/>
    <property type="match status" value="1"/>
</dbReference>
<dbReference type="PANTHER" id="PTHR12167:SF2">
    <property type="entry name" value="C-TYPE NATRIURETIC PEPTIDE"/>
    <property type="match status" value="1"/>
</dbReference>
<dbReference type="Pfam" id="PF00212">
    <property type="entry name" value="ANP"/>
    <property type="match status" value="1"/>
</dbReference>
<dbReference type="PRINTS" id="PR00710">
    <property type="entry name" value="NATPEPTIDES"/>
</dbReference>
<dbReference type="SMART" id="SM00183">
    <property type="entry name" value="NAT_PEP"/>
    <property type="match status" value="1"/>
</dbReference>
<dbReference type="PROSITE" id="PS00263">
    <property type="entry name" value="NATRIURETIC_PEPTIDE"/>
    <property type="match status" value="1"/>
</dbReference>
<protein>
    <recommendedName>
        <fullName evidence="9 10 11 13">Bradykinin-potentiating and C-type natriuretic peptides</fullName>
    </recommendedName>
    <alternativeName>
        <fullName evidence="9 11">BPP-CNP</fullName>
    </alternativeName>
    <component>
        <recommendedName>
            <fullName evidence="9">Bradykinin-potentiating peptide 1</fullName>
            <shortName evidence="9 13">BPP-1</shortName>
            <shortName evidence="9 11">Lm-BPP 1</shortName>
        </recommendedName>
        <alternativeName>
            <fullName evidence="12">LmrBPP9</fullName>
        </alternativeName>
    </component>
    <component>
        <recommendedName>
            <fullName evidence="9">Bradykinin-potentiating peptide 2</fullName>
            <shortName evidence="9 13">BPP-2</shortName>
            <shortName evidence="9 11">Lm-BPP 2</shortName>
        </recommendedName>
    </component>
    <component>
        <recommendedName>
            <fullName evidence="9">Bradykinin-potentiating peptide 3</fullName>
            <shortName evidence="9 13">BPP-3</shortName>
            <shortName evidence="9 11">Lm-BPP 3</shortName>
        </recommendedName>
    </component>
    <component>
        <recommendedName>
            <fullName evidence="9">Bradykinin-potentiating peptide 4</fullName>
            <shortName evidence="9 13">BPP-4</shortName>
            <shortName evidence="9 11">Lm-BPP 4</shortName>
        </recommendedName>
    </component>
    <component>
        <recommendedName>
            <fullName evidence="9">Bradykinin-potentiating peptide 5</fullName>
            <shortName evidence="9 13">BPP-5</shortName>
            <shortName evidence="9 11">Lm-BPP 5</shortName>
        </recommendedName>
    </component>
    <component>
        <recommendedName>
            <fullName evidence="10">Bradykinin inhibitory peptide</fullName>
            <shortName evidence="10">BIP</shortName>
        </recommendedName>
        <alternativeName>
            <fullName evidence="10">Bradykinin inhibitor peptide</fullName>
        </alternativeName>
    </component>
    <component>
        <recommendedName>
            <fullName evidence="9">C-type natriuretic peptide</fullName>
            <shortName evidence="9">CNP</shortName>
            <shortName evidence="9 11">Lm-CNP</shortName>
        </recommendedName>
    </component>
</protein>
<keyword id="KW-0165">Cleavage on pair of basic residues</keyword>
<keyword id="KW-0903">Direct protein sequencing</keyword>
<keyword id="KW-1015">Disulfide bond</keyword>
<keyword id="KW-0382">Hypotensive agent</keyword>
<keyword id="KW-0481">Metalloenzyme inhibitor</keyword>
<keyword id="KW-0483">Metalloprotease inhibitor</keyword>
<keyword id="KW-0646">Protease inhibitor</keyword>
<keyword id="KW-0873">Pyrrolidone carboxylic acid</keyword>
<keyword id="KW-0964">Secreted</keyword>
<keyword id="KW-0732">Signal</keyword>
<keyword id="KW-0800">Toxin</keyword>
<keyword id="KW-0838">Vasoactive</keyword>
<keyword id="KW-0840">Vasodilator</keyword>
<feature type="signal peptide" evidence="4">
    <location>
        <begin position="1"/>
        <end position="23"/>
    </location>
</feature>
<feature type="propeptide" id="PRO_0000258024" evidence="4 6">
    <location>
        <begin position="24"/>
        <end position="33"/>
    </location>
</feature>
<feature type="peptide" id="PRO_0000258025" description="Bradykinin-potentiating peptide 1" evidence="6">
    <location>
        <begin position="34"/>
        <end position="42"/>
    </location>
</feature>
<feature type="propeptide" id="PRO_0000258026" evidence="6">
    <location>
        <begin position="43"/>
        <end position="49"/>
    </location>
</feature>
<feature type="peptide" id="PRO_0000258027" description="Bradykinin-potentiating peptide 2" evidence="6">
    <location>
        <begin position="50"/>
        <end position="61"/>
    </location>
</feature>
<feature type="propeptide" id="PRO_0000258028" evidence="6">
    <location>
        <begin position="62"/>
        <end position="64"/>
    </location>
</feature>
<feature type="peptide" id="PRO_0000258029" description="Bradykinin-potentiating peptide 3" evidence="6">
    <location>
        <begin position="65"/>
        <end position="75"/>
    </location>
</feature>
<feature type="propeptide" id="PRO_0000258030" evidence="6">
    <location>
        <begin position="76"/>
        <end position="82"/>
    </location>
</feature>
<feature type="peptide" id="PRO_0000258031" description="Bradykinin-potentiating peptide 4" evidence="6">
    <location>
        <begin position="83"/>
        <end position="94"/>
    </location>
</feature>
<feature type="propeptide" id="PRO_0000258032" evidence="6">
    <location>
        <begin position="95"/>
        <end position="97"/>
    </location>
</feature>
<feature type="peptide" id="PRO_0000258033" description="Bradykinin-potentiating peptide 5" evidence="6">
    <location>
        <begin position="98"/>
        <end position="108"/>
    </location>
</feature>
<feature type="propeptide" id="PRO_0000258034" evidence="6 7">
    <location>
        <begin position="109"/>
        <end position="136"/>
    </location>
</feature>
<feature type="peptide" id="PRO_0000258035" description="Bradykinin inhibitory peptide" evidence="7">
    <location>
        <begin position="137"/>
        <end position="147"/>
    </location>
</feature>
<feature type="propeptide" id="PRO_0000258036" evidence="6 7">
    <location>
        <begin position="148"/>
        <end position="217"/>
    </location>
</feature>
<feature type="peptide" id="PRO_0000258037" description="C-type natriuretic peptide" evidence="6">
    <location>
        <begin position="218"/>
        <end position="239"/>
    </location>
</feature>
<feature type="region of interest" description="Disordered" evidence="5">
    <location>
        <begin position="132"/>
        <end position="205"/>
    </location>
</feature>
<feature type="compositionally biased region" description="Low complexity" evidence="5">
    <location>
        <begin position="161"/>
        <end position="171"/>
    </location>
</feature>
<feature type="compositionally biased region" description="Basic and acidic residues" evidence="5">
    <location>
        <begin position="173"/>
        <end position="183"/>
    </location>
</feature>
<feature type="modified residue" description="Pyrrolidone carboxylic acid" evidence="6">
    <location>
        <position position="50"/>
    </location>
</feature>
<feature type="modified residue" description="Pyrrolidone carboxylic acid" evidence="6">
    <location>
        <position position="65"/>
    </location>
</feature>
<feature type="modified residue" description="Pyrrolidone carboxylic acid" evidence="6">
    <location>
        <position position="83"/>
    </location>
</feature>
<feature type="modified residue" description="Pyrrolidone carboxylic acid" evidence="6">
    <location>
        <position position="98"/>
    </location>
</feature>
<feature type="disulfide bond" evidence="3">
    <location>
        <begin position="223"/>
        <end position="239"/>
    </location>
</feature>
<organism>
    <name type="scientific">Lachesis muta muta</name>
    <name type="common">Bushmaster</name>
    <dbReference type="NCBI Taxonomy" id="8753"/>
    <lineage>
        <taxon>Eukaryota</taxon>
        <taxon>Metazoa</taxon>
        <taxon>Chordata</taxon>
        <taxon>Craniata</taxon>
        <taxon>Vertebrata</taxon>
        <taxon>Euteleostomi</taxon>
        <taxon>Lepidosauria</taxon>
        <taxon>Squamata</taxon>
        <taxon>Bifurcata</taxon>
        <taxon>Unidentata</taxon>
        <taxon>Episquamata</taxon>
        <taxon>Toxicofera</taxon>
        <taxon>Serpentes</taxon>
        <taxon>Colubroidea</taxon>
        <taxon>Viperidae</taxon>
        <taxon>Crotalinae</taxon>
        <taxon>Lachesis</taxon>
    </lineage>
</organism>
<accession>Q27J49</accession>
<evidence type="ECO:0000250" key="1"/>
<evidence type="ECO:0000250" key="2">
    <source>
        <dbReference type="UniProtKB" id="P0C7P5"/>
    </source>
</evidence>
<evidence type="ECO:0000250" key="3">
    <source>
        <dbReference type="UniProtKB" id="P0DMD6"/>
    </source>
</evidence>
<evidence type="ECO:0000255" key="4"/>
<evidence type="ECO:0000256" key="5">
    <source>
        <dbReference type="SAM" id="MobiDB-lite"/>
    </source>
</evidence>
<evidence type="ECO:0000269" key="6">
    <source>
    </source>
</evidence>
<evidence type="ECO:0000269" key="7">
    <source>
    </source>
</evidence>
<evidence type="ECO:0000269" key="8">
    <source>
    </source>
</evidence>
<evidence type="ECO:0000303" key="9">
    <source>
    </source>
</evidence>
<evidence type="ECO:0000303" key="10">
    <source>
    </source>
</evidence>
<evidence type="ECO:0000303" key="11">
    <source>
    </source>
</evidence>
<evidence type="ECO:0000303" key="12">
    <source>
    </source>
</evidence>
<evidence type="ECO:0000305" key="13"/>
<evidence type="ECO:0000305" key="14">
    <source>
    </source>
</evidence>
<evidence type="ECO:0000305" key="15">
    <source>
    </source>
</evidence>
<evidence type="ECO:0000305" key="16">
    <source>
    </source>
</evidence>
<evidence type="ECO:0000312" key="17">
    <source>
        <dbReference type="EMBL" id="ABD52884.1"/>
    </source>
</evidence>
<reference evidence="17" key="1">
    <citation type="journal article" date="2005" name="Toxicon">
        <title>Identification of novel bradykinin-potentiating peptides and C-type natriuretic peptide from Lachesis muta venom.</title>
        <authorList>
            <person name="Soares M.R."/>
            <person name="Oliveira-Carvalho A.L."/>
            <person name="Wermelinger L.S."/>
            <person name="Zingali R.B."/>
            <person name="Ho P.L."/>
            <person name="Junqueira-de-Azevedo I.L.M."/>
            <person name="Diniz M.R.V."/>
        </authorList>
    </citation>
    <scope>NUCLEOTIDE SEQUENCE [MRNA]</scope>
    <scope>PROTEIN SEQUENCE OF 34-42; 50-61; 65-75; 83-94; 98-108 AND 218-239</scope>
    <scope>PYROGLUTAMATE FORMATION AT GLN-50; GLN-65; GLN-83 AND GLN-98</scope>
    <scope>SUBCELLULAR LOCATION</scope>
    <scope>MASS SPECTROMETRY</scope>
    <source>
        <tissue>Venom</tissue>
        <tissue>Venom gland</tissue>
    </source>
</reference>
<reference evidence="17" key="2">
    <citation type="journal article" date="2006" name="Genetics">
        <title>Lachesis muta (Viperidae) cDNAs reveal diverging pit viper molecules and scaffolds typical of cobra (Elapidae) venoms: implications for snake toxin repertoire evolution.</title>
        <authorList>
            <person name="Junqueira-de-Azevedo I.L.M."/>
            <person name="Ching A.T.C."/>
            <person name="Carvalho E."/>
            <person name="Faria F."/>
            <person name="Nishiyama M.Y. Jr."/>
            <person name="Ho P.L."/>
            <person name="Diniz M.R.V."/>
        </authorList>
    </citation>
    <scope>NUCLEOTIDE SEQUENCE [MRNA]</scope>
    <source>
        <tissue>Venom gland</tissue>
    </source>
</reference>
<reference key="3">
    <citation type="journal article" date="2005" name="Biochem. Biophys. Res. Commun.">
        <title>Identification and functional analysis of a novel bradykinin inhibitory peptide in the venoms of new world crotalinae pit vipers.</title>
        <authorList>
            <person name="Graham R.L.J."/>
            <person name="Graham C."/>
            <person name="McClean S."/>
            <person name="Chen T."/>
            <person name="O'Rourke M."/>
            <person name="Hirst D."/>
            <person name="Theakston D."/>
            <person name="Shaw C."/>
        </authorList>
    </citation>
    <scope>PROTEIN SEQUENCE OF 137-147</scope>
    <scope>FUNCTION</scope>
    <scope>SUBCELLULAR LOCATION</scope>
    <scope>MASS SPECTROMETRY</scope>
    <source>
        <tissue>Venom</tissue>
    </source>
</reference>
<reference key="4">
    <citation type="journal article" date="2018" name="Peptides">
        <title>LmrBPP9: a synthetic bradykinin-potentiating peptide from Lachesis muta rhombeata venom that inhibits the angiotensin-converting enzyme activity in vitro and reduces the blood pressure of hypertensive rats.</title>
        <authorList>
            <person name="Pinheiro-Junior E.L."/>
            <person name="Boldrini-Franca J."/>
            <person name="de Campos Araujo L.M.P."/>
            <person name="Santos-Filho N.A."/>
            <person name="Bendhack L.M."/>
            <person name="Cilli E.M."/>
            <person name="Arantes E.C."/>
        </authorList>
    </citation>
    <scope>PROTEIN SEQUENCE OF 34-42</scope>
    <scope>SYNTHESIS OF 34-42</scope>
    <scope>FUNCTION</scope>
    <scope>BIOASSAY</scope>
    <scope>SUBCELLULAR LOCATION</scope>
    <scope>MASS SPECTROMETRY</scope>
    <source>
        <tissue>Venom</tissue>
    </source>
</reference>
<proteinExistence type="evidence at protein level"/>
<name>BNP_LACMU</name>
<sequence>MFVSRLAASGLLLLALLAVSLDGKPVQQWSHKGWPPRPQIPPLVVQQWSQKPWPPGHHIPPVVVQEWPPGHHIPPLVVQQWSQKKWPPGHHIPPLVVQKWDPPPISPPLLKPHESPAGGTTALREELSLGPEAALDTPPAGPDVGPRGSKAPAAPHRLPKSKGASATSAASRPMRDLRTDGKQARQNWGRMMNPDHHAVGGGGGGGGARRLKGLAKKRVGDGCFGLKLDRIGSMSGLGC</sequence>